<comment type="function">
    <text evidence="2">One of the essential components for the initiation of protein synthesis. Stabilizes the binding of IF-2 and IF-3 on the 30S subunit to which N-formylmethionyl-tRNA(fMet) subsequently binds. Helps modulate mRNA selection, yielding the 30S pre-initiation complex (PIC). Upon addition of the 50S ribosomal subunit IF-1, IF-2 and IF-3 are released leaving the mature 70S translation initiation complex.</text>
</comment>
<comment type="subunit">
    <text evidence="2">Component of the 30S ribosomal translation pre-initiation complex which assembles on the 30S ribosome in the order IF-2 and IF-3, IF-1 and N-formylmethionyl-tRNA(fMet); mRNA recruitment can occur at any time during PIC assembly.</text>
</comment>
<comment type="subcellular location">
    <subcellularLocation>
        <location evidence="2">Cytoplasm</location>
    </subcellularLocation>
</comment>
<comment type="similarity">
    <text evidence="2">Belongs to the IF-1 family.</text>
</comment>
<sequence>MAKEDVIEIQGTIKETLPNAMFKVELENGAEILAHVSGKIRMHYIRILPGDKVTVEMSPYDLTKGRITYRFK</sequence>
<proteinExistence type="inferred from homology"/>
<feature type="initiator methionine" description="Removed" evidence="1">
    <location>
        <position position="1"/>
    </location>
</feature>
<feature type="chain" id="PRO_0000095806" description="Translation initiation factor IF-1">
    <location>
        <begin position="2"/>
        <end position="72"/>
    </location>
</feature>
<feature type="domain" description="S1-like" evidence="2">
    <location>
        <begin position="2"/>
        <end position="72"/>
    </location>
</feature>
<accession>Q88XW4</accession>
<accession>F9UMM7</accession>
<keyword id="KW-0963">Cytoplasm</keyword>
<keyword id="KW-0396">Initiation factor</keyword>
<keyword id="KW-0648">Protein biosynthesis</keyword>
<keyword id="KW-1185">Reference proteome</keyword>
<keyword id="KW-0694">RNA-binding</keyword>
<keyword id="KW-0699">rRNA-binding</keyword>
<evidence type="ECO:0000250" key="1"/>
<evidence type="ECO:0000255" key="2">
    <source>
        <dbReference type="HAMAP-Rule" id="MF_00075"/>
    </source>
</evidence>
<dbReference type="EMBL" id="AL935263">
    <property type="protein sequence ID" value="CCC78466.1"/>
    <property type="molecule type" value="Genomic_DNA"/>
</dbReference>
<dbReference type="RefSeq" id="WP_003638082.1">
    <property type="nucleotide sequence ID" value="NC_004567.2"/>
</dbReference>
<dbReference type="RefSeq" id="YP_004888980.1">
    <property type="nucleotide sequence ID" value="NC_004567.2"/>
</dbReference>
<dbReference type="SMR" id="Q88XW4"/>
<dbReference type="STRING" id="220668.lp_1059"/>
<dbReference type="EnsemblBacteria" id="CCC78466">
    <property type="protein sequence ID" value="CCC78466"/>
    <property type="gene ID" value="lp_1059"/>
</dbReference>
<dbReference type="GeneID" id="89668569"/>
<dbReference type="KEGG" id="lpl:lp_1059"/>
<dbReference type="PATRIC" id="fig|220668.9.peg.893"/>
<dbReference type="eggNOG" id="COG0361">
    <property type="taxonomic scope" value="Bacteria"/>
</dbReference>
<dbReference type="HOGENOM" id="CLU_151267_1_0_9"/>
<dbReference type="OrthoDB" id="9803250at2"/>
<dbReference type="PhylomeDB" id="Q88XW4"/>
<dbReference type="Proteomes" id="UP000000432">
    <property type="component" value="Chromosome"/>
</dbReference>
<dbReference type="GO" id="GO:0005829">
    <property type="term" value="C:cytosol"/>
    <property type="evidence" value="ECO:0007669"/>
    <property type="project" value="TreeGrafter"/>
</dbReference>
<dbReference type="GO" id="GO:0043022">
    <property type="term" value="F:ribosome binding"/>
    <property type="evidence" value="ECO:0007669"/>
    <property type="project" value="UniProtKB-UniRule"/>
</dbReference>
<dbReference type="GO" id="GO:0019843">
    <property type="term" value="F:rRNA binding"/>
    <property type="evidence" value="ECO:0007669"/>
    <property type="project" value="UniProtKB-UniRule"/>
</dbReference>
<dbReference type="GO" id="GO:0003743">
    <property type="term" value="F:translation initiation factor activity"/>
    <property type="evidence" value="ECO:0007669"/>
    <property type="project" value="UniProtKB-UniRule"/>
</dbReference>
<dbReference type="CDD" id="cd04451">
    <property type="entry name" value="S1_IF1"/>
    <property type="match status" value="1"/>
</dbReference>
<dbReference type="FunFam" id="2.40.50.140:FF:000002">
    <property type="entry name" value="Translation initiation factor IF-1"/>
    <property type="match status" value="1"/>
</dbReference>
<dbReference type="Gene3D" id="2.40.50.140">
    <property type="entry name" value="Nucleic acid-binding proteins"/>
    <property type="match status" value="1"/>
</dbReference>
<dbReference type="HAMAP" id="MF_00075">
    <property type="entry name" value="IF_1"/>
    <property type="match status" value="1"/>
</dbReference>
<dbReference type="InterPro" id="IPR012340">
    <property type="entry name" value="NA-bd_OB-fold"/>
</dbReference>
<dbReference type="InterPro" id="IPR006196">
    <property type="entry name" value="RNA-binding_domain_S1_IF1"/>
</dbReference>
<dbReference type="InterPro" id="IPR003029">
    <property type="entry name" value="S1_domain"/>
</dbReference>
<dbReference type="InterPro" id="IPR004368">
    <property type="entry name" value="TIF_IF1"/>
</dbReference>
<dbReference type="NCBIfam" id="TIGR00008">
    <property type="entry name" value="infA"/>
    <property type="match status" value="1"/>
</dbReference>
<dbReference type="PANTHER" id="PTHR33370">
    <property type="entry name" value="TRANSLATION INITIATION FACTOR IF-1, CHLOROPLASTIC"/>
    <property type="match status" value="1"/>
</dbReference>
<dbReference type="PANTHER" id="PTHR33370:SF1">
    <property type="entry name" value="TRANSLATION INITIATION FACTOR IF-1, CHLOROPLASTIC"/>
    <property type="match status" value="1"/>
</dbReference>
<dbReference type="Pfam" id="PF01176">
    <property type="entry name" value="eIF-1a"/>
    <property type="match status" value="1"/>
</dbReference>
<dbReference type="SMART" id="SM00316">
    <property type="entry name" value="S1"/>
    <property type="match status" value="1"/>
</dbReference>
<dbReference type="SUPFAM" id="SSF50249">
    <property type="entry name" value="Nucleic acid-binding proteins"/>
    <property type="match status" value="1"/>
</dbReference>
<dbReference type="PROSITE" id="PS50832">
    <property type="entry name" value="S1_IF1_TYPE"/>
    <property type="match status" value="1"/>
</dbReference>
<name>IF1_LACPL</name>
<organism>
    <name type="scientific">Lactiplantibacillus plantarum (strain ATCC BAA-793 / NCIMB 8826 / WCFS1)</name>
    <name type="common">Lactobacillus plantarum</name>
    <dbReference type="NCBI Taxonomy" id="220668"/>
    <lineage>
        <taxon>Bacteria</taxon>
        <taxon>Bacillati</taxon>
        <taxon>Bacillota</taxon>
        <taxon>Bacilli</taxon>
        <taxon>Lactobacillales</taxon>
        <taxon>Lactobacillaceae</taxon>
        <taxon>Lactiplantibacillus</taxon>
    </lineage>
</organism>
<gene>
    <name evidence="2" type="primary">infA</name>
    <name type="ordered locus">lp_1059</name>
</gene>
<protein>
    <recommendedName>
        <fullName evidence="2">Translation initiation factor IF-1</fullName>
    </recommendedName>
</protein>
<reference key="1">
    <citation type="journal article" date="2003" name="Proc. Natl. Acad. Sci. U.S.A.">
        <title>Complete genome sequence of Lactobacillus plantarum WCFS1.</title>
        <authorList>
            <person name="Kleerebezem M."/>
            <person name="Boekhorst J."/>
            <person name="van Kranenburg R."/>
            <person name="Molenaar D."/>
            <person name="Kuipers O.P."/>
            <person name="Leer R."/>
            <person name="Tarchini R."/>
            <person name="Peters S.A."/>
            <person name="Sandbrink H.M."/>
            <person name="Fiers M.W.E.J."/>
            <person name="Stiekema W."/>
            <person name="Klein Lankhorst R.M."/>
            <person name="Bron P.A."/>
            <person name="Hoffer S.M."/>
            <person name="Nierop Groot M.N."/>
            <person name="Kerkhoven R."/>
            <person name="De Vries M."/>
            <person name="Ursing B."/>
            <person name="De Vos W.M."/>
            <person name="Siezen R.J."/>
        </authorList>
    </citation>
    <scope>NUCLEOTIDE SEQUENCE [LARGE SCALE GENOMIC DNA]</scope>
    <source>
        <strain>ATCC BAA-793 / NCIMB 8826 / WCFS1</strain>
    </source>
</reference>
<reference key="2">
    <citation type="journal article" date="2012" name="J. Bacteriol.">
        <title>Complete resequencing and reannotation of the Lactobacillus plantarum WCFS1 genome.</title>
        <authorList>
            <person name="Siezen R.J."/>
            <person name="Francke C."/>
            <person name="Renckens B."/>
            <person name="Boekhorst J."/>
            <person name="Wels M."/>
            <person name="Kleerebezem M."/>
            <person name="van Hijum S.A."/>
        </authorList>
    </citation>
    <scope>NUCLEOTIDE SEQUENCE [LARGE SCALE GENOMIC DNA]</scope>
    <scope>GENOME REANNOTATION</scope>
    <source>
        <strain>ATCC BAA-793 / NCIMB 8826 / WCFS1</strain>
    </source>
</reference>